<comment type="function">
    <text evidence="10 11">Component of the mitochondrial ribosome (mitoribosome), a dedicated translation machinery responsible for the synthesis of mitochondrial genome-encoded proteins, including at least some of the essential transmembrane subunits of the mitochondrial respiratory chain. The mitoribosomes are attached to the mitochondrial inner membrane and translation products are cotranslationally integrated into the membrane.</text>
</comment>
<comment type="subunit">
    <text evidence="4 5">Component of the mitochondrial large ribosomal subunit (mt-LSU). Mature yeast 74S mitochondrial ribosomes consist of a small (37S) and a large (54S) subunit. The 37S small subunit contains a 15S ribosomal RNA (15S mt-rRNA) and 34 different proteins. The 54S large subunit contains a 21S rRNA (21S mt-rRNA) and 46 different proteins.</text>
</comment>
<comment type="subcellular location">
    <subcellularLocation>
        <location evidence="1 3">Mitochondrion</location>
    </subcellularLocation>
    <text evidence="6">Mitoribosomes are tethered to the mitochondrial inner membrane and spatially aligned with the membrane insertion machinery through two distinct membrane contact sites, formed by the 21S rRNA expansion segment 96-ES1 and the inner membrane protein MBA1.</text>
</comment>
<comment type="miscellaneous">
    <text evidence="2">Present with 1350 molecules/cell in log phase SD medium.</text>
</comment>
<comment type="similarity">
    <text evidence="9">Belongs to the mitochondrion-specific ribosomal protein mL50 family.</text>
</comment>
<comment type="sequence caution" evidence="9">
    <conflict type="erroneous initiation">
        <sequence resource="EMBL-CDS" id="CAA46246"/>
    </conflict>
</comment>
<comment type="sequence caution" evidence="9">
    <conflict type="erroneous initiation">
        <sequence resource="EMBL-CDS" id="CAA52022"/>
    </conflict>
</comment>
<comment type="sequence caution" evidence="9">
    <conflict type="erroneous initiation">
        <sequence resource="EMBL-CDS" id="CAA82076"/>
    </conflict>
</comment>
<dbReference type="EMBL" id="X73673">
    <property type="protein sequence ID" value="CAA52022.1"/>
    <property type="status" value="ALT_INIT"/>
    <property type="molecule type" value="Genomic_DNA"/>
</dbReference>
<dbReference type="EMBL" id="X65124">
    <property type="protein sequence ID" value="CAA46246.1"/>
    <property type="status" value="ALT_INIT"/>
    <property type="molecule type" value="Genomic_DNA"/>
</dbReference>
<dbReference type="EMBL" id="Z28231">
    <property type="protein sequence ID" value="CAA82076.1"/>
    <property type="status" value="ALT_INIT"/>
    <property type="molecule type" value="Genomic_DNA"/>
</dbReference>
<dbReference type="EMBL" id="BK006944">
    <property type="protein sequence ID" value="DAA09162.1"/>
    <property type="molecule type" value="Genomic_DNA"/>
</dbReference>
<dbReference type="PIR" id="S25816">
    <property type="entry name" value="S25816"/>
</dbReference>
<dbReference type="RefSeq" id="NP_012931.4">
    <property type="nucleotide sequence ID" value="NM_001179796.3"/>
</dbReference>
<dbReference type="PDB" id="3J6B">
    <property type="method" value="EM"/>
    <property type="resolution" value="3.20 A"/>
    <property type="chains" value="8=1-264"/>
</dbReference>
<dbReference type="PDB" id="5MRC">
    <property type="method" value="EM"/>
    <property type="resolution" value="3.25 A"/>
    <property type="chains" value="8=1-264"/>
</dbReference>
<dbReference type="PDB" id="5MRE">
    <property type="method" value="EM"/>
    <property type="resolution" value="3.75 A"/>
    <property type="chains" value="8=1-264"/>
</dbReference>
<dbReference type="PDB" id="5MRF">
    <property type="method" value="EM"/>
    <property type="resolution" value="4.97 A"/>
    <property type="chains" value="8=1-264"/>
</dbReference>
<dbReference type="PDBsum" id="3J6B"/>
<dbReference type="PDBsum" id="5MRC"/>
<dbReference type="PDBsum" id="5MRE"/>
<dbReference type="PDBsum" id="5MRF"/>
<dbReference type="EMDB" id="EMD-3551"/>
<dbReference type="EMDB" id="EMD-3552"/>
<dbReference type="EMDB" id="EMD-3553"/>
<dbReference type="SMR" id="Q02204"/>
<dbReference type="BioGRID" id="34138">
    <property type="interactions" value="156"/>
</dbReference>
<dbReference type="ComplexPortal" id="CPX-1602">
    <property type="entry name" value="54S mitochondrial large ribosomal subunit"/>
</dbReference>
<dbReference type="DIP" id="DIP-2092N"/>
<dbReference type="FunCoup" id="Q02204">
    <property type="interactions" value="388"/>
</dbReference>
<dbReference type="IntAct" id="Q02204">
    <property type="interactions" value="71"/>
</dbReference>
<dbReference type="MINT" id="Q02204"/>
<dbReference type="STRING" id="4932.YKR006C"/>
<dbReference type="iPTMnet" id="Q02204"/>
<dbReference type="PaxDb" id="4932-YKR006C"/>
<dbReference type="PeptideAtlas" id="Q02204"/>
<dbReference type="EnsemblFungi" id="YKR006C_mRNA">
    <property type="protein sequence ID" value="YKR006C"/>
    <property type="gene ID" value="YKR006C"/>
</dbReference>
<dbReference type="GeneID" id="853875"/>
<dbReference type="KEGG" id="sce:YKR006C"/>
<dbReference type="AGR" id="SGD:S000001714"/>
<dbReference type="SGD" id="S000001714">
    <property type="gene designation" value="MRPL13"/>
</dbReference>
<dbReference type="VEuPathDB" id="FungiDB:YKR006C"/>
<dbReference type="eggNOG" id="ENOG502S1NZ">
    <property type="taxonomic scope" value="Eukaryota"/>
</dbReference>
<dbReference type="HOGENOM" id="CLU_103468_0_0_1"/>
<dbReference type="InParanoid" id="Q02204"/>
<dbReference type="OMA" id="FQFTKFL"/>
<dbReference type="OrthoDB" id="3980895at2759"/>
<dbReference type="BioCyc" id="YEAST:G3O-31984-MONOMER"/>
<dbReference type="BioGRID-ORCS" id="853875">
    <property type="hits" value="10 hits in 10 CRISPR screens"/>
</dbReference>
<dbReference type="PRO" id="PR:Q02204"/>
<dbReference type="Proteomes" id="UP000002311">
    <property type="component" value="Chromosome XI"/>
</dbReference>
<dbReference type="RNAct" id="Q02204">
    <property type="molecule type" value="protein"/>
</dbReference>
<dbReference type="GO" id="GO:0005743">
    <property type="term" value="C:mitochondrial inner membrane"/>
    <property type="evidence" value="ECO:0000303"/>
    <property type="project" value="ComplexPortal"/>
</dbReference>
<dbReference type="GO" id="GO:0005762">
    <property type="term" value="C:mitochondrial large ribosomal subunit"/>
    <property type="evidence" value="ECO:0000314"/>
    <property type="project" value="SGD"/>
</dbReference>
<dbReference type="GO" id="GO:0005739">
    <property type="term" value="C:mitochondrion"/>
    <property type="evidence" value="ECO:0007005"/>
    <property type="project" value="SGD"/>
</dbReference>
<dbReference type="GO" id="GO:0003735">
    <property type="term" value="F:structural constituent of ribosome"/>
    <property type="evidence" value="ECO:0000314"/>
    <property type="project" value="SGD"/>
</dbReference>
<dbReference type="GO" id="GO:0032543">
    <property type="term" value="P:mitochondrial translation"/>
    <property type="evidence" value="ECO:0000303"/>
    <property type="project" value="ComplexPortal"/>
</dbReference>
<dbReference type="Gene3D" id="1.10.1200.10">
    <property type="entry name" value="ACP-like"/>
    <property type="match status" value="1"/>
</dbReference>
<dbReference type="InterPro" id="IPR036736">
    <property type="entry name" value="ACP-like_sf"/>
</dbReference>
<dbReference type="InterPro" id="IPR018305">
    <property type="entry name" value="Ribosomal_m50"/>
</dbReference>
<dbReference type="Pfam" id="PF10501">
    <property type="entry name" value="Ribosomal_L50"/>
    <property type="match status" value="1"/>
</dbReference>
<protein>
    <recommendedName>
        <fullName evidence="8">Large ribosomal subunit protein mL50</fullName>
    </recommendedName>
    <alternativeName>
        <fullName>54S ribosomal protein L13, mitochondrial</fullName>
    </alternativeName>
    <alternativeName>
        <fullName>YmL13</fullName>
    </alternativeName>
</protein>
<name>RM13_YEAST</name>
<feature type="transit peptide" description="Mitochondrion" evidence="4 7">
    <location>
        <begin position="1"/>
        <end position="75"/>
    </location>
</feature>
<feature type="chain" id="PRO_0000030571" description="Large ribosomal subunit protein mL50">
    <location>
        <begin position="76"/>
        <end position="264"/>
    </location>
</feature>
<feature type="sequence conflict" description="In Ref. 2; CAA52022." evidence="9" ref="2">
    <original>A</original>
    <variation>S</variation>
    <location>
        <position position="108"/>
    </location>
</feature>
<reference key="1">
    <citation type="journal article" date="1994" name="Curr. Genet.">
        <title>The yeast nuclear gene MRP-L13 codes for a protein of the large subunit of the mitochondrial ribosome.</title>
        <authorList>
            <person name="Grohmann L."/>
            <person name="Kitakawa M."/>
            <person name="Isono K."/>
            <person name="Goldschmidt-Reisin S."/>
            <person name="Graack H.-R."/>
        </authorList>
    </citation>
    <scope>NUCLEOTIDE SEQUENCE [GENOMIC DNA]</scope>
    <source>
        <strain>07173</strain>
    </source>
</reference>
<reference key="2">
    <citation type="journal article" date="1992" name="Yeast">
        <title>DNA sequencing and analysis of a 24.7 kb segment encompassing centromere CEN11 of Saccharomyces cerevisiae reveals nine previously unknown open reading frames.</title>
        <authorList>
            <person name="Duesterhoeft A."/>
            <person name="Philippsen P."/>
        </authorList>
    </citation>
    <scope>NUCLEOTIDE SEQUENCE [GENOMIC DNA]</scope>
    <source>
        <strain>ATCC 204508 / S288c</strain>
    </source>
</reference>
<reference key="3">
    <citation type="journal article" date="1994" name="Nature">
        <title>Complete DNA sequence of yeast chromosome XI.</title>
        <authorList>
            <person name="Dujon B."/>
            <person name="Alexandraki D."/>
            <person name="Andre B."/>
            <person name="Ansorge W."/>
            <person name="Baladron V."/>
            <person name="Ballesta J.P.G."/>
            <person name="Banrevi A."/>
            <person name="Bolle P.-A."/>
            <person name="Bolotin-Fukuhara M."/>
            <person name="Bossier P."/>
            <person name="Bou G."/>
            <person name="Boyer J."/>
            <person name="Buitrago M.J."/>
            <person name="Cheret G."/>
            <person name="Colleaux L."/>
            <person name="Daignan-Fornier B."/>
            <person name="del Rey F."/>
            <person name="Dion C."/>
            <person name="Domdey H."/>
            <person name="Duesterhoeft A."/>
            <person name="Duesterhus S."/>
            <person name="Entian K.-D."/>
            <person name="Erfle H."/>
            <person name="Esteban P.F."/>
            <person name="Feldmann H."/>
            <person name="Fernandes L."/>
            <person name="Fobo G.M."/>
            <person name="Fritz C."/>
            <person name="Fukuhara H."/>
            <person name="Gabel C."/>
            <person name="Gaillon L."/>
            <person name="Garcia-Cantalejo J.M."/>
            <person name="Garcia-Ramirez J.J."/>
            <person name="Gent M.E."/>
            <person name="Ghazvini M."/>
            <person name="Goffeau A."/>
            <person name="Gonzalez A."/>
            <person name="Grothues D."/>
            <person name="Guerreiro P."/>
            <person name="Hegemann J.H."/>
            <person name="Hewitt N."/>
            <person name="Hilger F."/>
            <person name="Hollenberg C.P."/>
            <person name="Horaitis O."/>
            <person name="Indge K.J."/>
            <person name="Jacquier A."/>
            <person name="James C.M."/>
            <person name="Jauniaux J.-C."/>
            <person name="Jimenez A."/>
            <person name="Keuchel H."/>
            <person name="Kirchrath L."/>
            <person name="Kleine K."/>
            <person name="Koetter P."/>
            <person name="Legrain P."/>
            <person name="Liebl S."/>
            <person name="Louis E.J."/>
            <person name="Maia e Silva A."/>
            <person name="Marck C."/>
            <person name="Monnier A.-L."/>
            <person name="Moestl D."/>
            <person name="Mueller S."/>
            <person name="Obermaier B."/>
            <person name="Oliver S.G."/>
            <person name="Pallier C."/>
            <person name="Pascolo S."/>
            <person name="Pfeiffer F."/>
            <person name="Philippsen P."/>
            <person name="Planta R.J."/>
            <person name="Pohl F.M."/>
            <person name="Pohl T.M."/>
            <person name="Poehlmann R."/>
            <person name="Portetelle D."/>
            <person name="Purnelle B."/>
            <person name="Puzos V."/>
            <person name="Ramezani Rad M."/>
            <person name="Rasmussen S.W."/>
            <person name="Remacha M.A."/>
            <person name="Revuelta J.L."/>
            <person name="Richard G.-F."/>
            <person name="Rieger M."/>
            <person name="Rodrigues-Pousada C."/>
            <person name="Rose M."/>
            <person name="Rupp T."/>
            <person name="Santos M.A."/>
            <person name="Schwager C."/>
            <person name="Sensen C."/>
            <person name="Skala J."/>
            <person name="Soares H."/>
            <person name="Sor F."/>
            <person name="Stegemann J."/>
            <person name="Tettelin H."/>
            <person name="Thierry A."/>
            <person name="Tzermia M."/>
            <person name="Urrestarazu L.A."/>
            <person name="van Dyck L."/>
            <person name="van Vliet-Reedijk J.C."/>
            <person name="Valens M."/>
            <person name="Vandenbol M."/>
            <person name="Vilela C."/>
            <person name="Vissers S."/>
            <person name="von Wettstein D."/>
            <person name="Voss H."/>
            <person name="Wiemann S."/>
            <person name="Xu G."/>
            <person name="Zimmermann J."/>
            <person name="Haasemann M."/>
            <person name="Becker I."/>
            <person name="Mewes H.-W."/>
        </authorList>
    </citation>
    <scope>NUCLEOTIDE SEQUENCE [LARGE SCALE GENOMIC DNA]</scope>
    <source>
        <strain>ATCC 204508 / S288c</strain>
    </source>
</reference>
<reference key="4">
    <citation type="journal article" date="2014" name="G3 (Bethesda)">
        <title>The reference genome sequence of Saccharomyces cerevisiae: Then and now.</title>
        <authorList>
            <person name="Engel S.R."/>
            <person name="Dietrich F.S."/>
            <person name="Fisk D.G."/>
            <person name="Binkley G."/>
            <person name="Balakrishnan R."/>
            <person name="Costanzo M.C."/>
            <person name="Dwight S.S."/>
            <person name="Hitz B.C."/>
            <person name="Karra K."/>
            <person name="Nash R.S."/>
            <person name="Weng S."/>
            <person name="Wong E.D."/>
            <person name="Lloyd P."/>
            <person name="Skrzypek M.S."/>
            <person name="Miyasato S.R."/>
            <person name="Simison M."/>
            <person name="Cherry J.M."/>
        </authorList>
    </citation>
    <scope>GENOME REANNOTATION</scope>
    <source>
        <strain>ATCC 204508 / S288c</strain>
    </source>
</reference>
<reference key="5">
    <citation type="journal article" date="1991" name="FEBS Lett.">
        <title>Extended N-terminal sequencing of proteins of the large ribosomal subunit from yeast mitochondria.</title>
        <authorList>
            <person name="Grohmann L."/>
            <person name="Graack H.-R."/>
            <person name="Kruft V."/>
            <person name="Choli T."/>
            <person name="Goldschmidt-Reisin S."/>
            <person name="Kitakawa M."/>
        </authorList>
    </citation>
    <scope>PROTEIN SEQUENCE OF 76-109</scope>
    <scope>SUBUNIT</scope>
    <source>
        <strain>07173</strain>
    </source>
</reference>
<reference key="6">
    <citation type="journal article" date="1993" name="Biochem. Mol. Biol. Int.">
        <title>Transport of mitoribosomal proteins, YmL13 and MRP7, into isolated mitochondria of Saccharomyces cerevisiae.</title>
        <authorList>
            <person name="Matsushita Y."/>
            <person name="Isono K."/>
        </authorList>
    </citation>
    <scope>TRANSPORT INTO MITOCHONDRIA</scope>
</reference>
<reference key="7">
    <citation type="journal article" date="2003" name="Nature">
        <title>Sequencing and comparison of yeast species to identify genes and regulatory elements.</title>
        <authorList>
            <person name="Kellis M."/>
            <person name="Patterson N."/>
            <person name="Endrizzi M."/>
            <person name="Birren B.W."/>
            <person name="Lander E.S."/>
        </authorList>
    </citation>
    <scope>IDENTIFICATION OF PROBABLE INITIATION SITE</scope>
</reference>
<reference key="8">
    <citation type="journal article" date="2003" name="Nature">
        <title>Global analysis of protein localization in budding yeast.</title>
        <authorList>
            <person name="Huh W.-K."/>
            <person name="Falvo J.V."/>
            <person name="Gerke L.C."/>
            <person name="Carroll A.S."/>
            <person name="Howson R.W."/>
            <person name="Weissman J.S."/>
            <person name="O'Shea E.K."/>
        </authorList>
    </citation>
    <scope>SUBCELLULAR LOCATION [LARGE SCALE ANALYSIS]</scope>
</reference>
<reference key="9">
    <citation type="journal article" date="2003" name="Nature">
        <title>Global analysis of protein expression in yeast.</title>
        <authorList>
            <person name="Ghaemmaghami S."/>
            <person name="Huh W.-K."/>
            <person name="Bower K."/>
            <person name="Howson R.W."/>
            <person name="Belle A."/>
            <person name="Dephoure N."/>
            <person name="O'Shea E.K."/>
            <person name="Weissman J.S."/>
        </authorList>
    </citation>
    <scope>LEVEL OF PROTEIN EXPRESSION [LARGE SCALE ANALYSIS]</scope>
</reference>
<reference key="10">
    <citation type="journal article" date="2003" name="Proc. Natl. Acad. Sci. U.S.A.">
        <title>The proteome of Saccharomyces cerevisiae mitochondria.</title>
        <authorList>
            <person name="Sickmann A."/>
            <person name="Reinders J."/>
            <person name="Wagner Y."/>
            <person name="Joppich C."/>
            <person name="Zahedi R.P."/>
            <person name="Meyer H.E."/>
            <person name="Schoenfisch B."/>
            <person name="Perschil I."/>
            <person name="Chacinska A."/>
            <person name="Guiard B."/>
            <person name="Rehling P."/>
            <person name="Pfanner N."/>
            <person name="Meisinger C."/>
        </authorList>
    </citation>
    <scope>SUBCELLULAR LOCATION [LARGE SCALE ANALYSIS]</scope>
    <source>
        <strain>ATCC 76625 / YPH499</strain>
    </source>
</reference>
<reference key="11">
    <citation type="journal article" date="2015" name="Nat. Commun.">
        <title>Organization of the mitochondrial translation machinery studied in situ by cryoelectron tomography.</title>
        <authorList>
            <person name="Pfeffer S."/>
            <person name="Woellhaf M.W."/>
            <person name="Herrmann J.M."/>
            <person name="Forster F."/>
        </authorList>
    </citation>
    <scope>SUBCELLULAR LOCATION</scope>
</reference>
<reference key="12">
    <citation type="journal article" date="2014" name="Science">
        <title>Structure of the yeast mitochondrial large ribosomal subunit.</title>
        <authorList>
            <person name="Amunts A."/>
            <person name="Brown A."/>
            <person name="Bai X.C."/>
            <person name="Llacer J.L."/>
            <person name="Hussain T."/>
            <person name="Emsley P."/>
            <person name="Long F."/>
            <person name="Murshudov G."/>
            <person name="Scheres S.H."/>
            <person name="Ramakrishnan V."/>
        </authorList>
    </citation>
    <scope>STRUCTURE BY ELECTRON MICROSCOPY (3.20 ANGSTROMS)</scope>
    <scope>SUBUNIT</scope>
</reference>
<evidence type="ECO:0000269" key="1">
    <source>
    </source>
</evidence>
<evidence type="ECO:0000269" key="2">
    <source>
    </source>
</evidence>
<evidence type="ECO:0000269" key="3">
    <source>
    </source>
</evidence>
<evidence type="ECO:0000269" key="4">
    <source>
    </source>
</evidence>
<evidence type="ECO:0000269" key="5">
    <source>
    </source>
</evidence>
<evidence type="ECO:0000269" key="6">
    <source>
    </source>
</evidence>
<evidence type="ECO:0000269" key="7">
    <source>
    </source>
</evidence>
<evidence type="ECO:0000303" key="8">
    <source>
    </source>
</evidence>
<evidence type="ECO:0000305" key="9"/>
<evidence type="ECO:0000305" key="10">
    <source>
    </source>
</evidence>
<evidence type="ECO:0000305" key="11">
    <source>
    </source>
</evidence>
<keyword id="KW-0002">3D-structure</keyword>
<keyword id="KW-0903">Direct protein sequencing</keyword>
<keyword id="KW-0496">Mitochondrion</keyword>
<keyword id="KW-1185">Reference proteome</keyword>
<keyword id="KW-0687">Ribonucleoprotein</keyword>
<keyword id="KW-0689">Ribosomal protein</keyword>
<keyword id="KW-0809">Transit peptide</keyword>
<proteinExistence type="evidence at protein level"/>
<sequence length="264" mass="30271">MSSLLKLHCIRPLPQRSVWLSGYKQKARCIHSSAANGDFMSWFKRKKQEEHQEPVKDTKQLIKDIEEGTNEASSQSSSNNKNRLELIPENFIGEGSRRCKRQKELKLAVSSAPFNQWLSRDKITSDNQLDDMILQATEKTLGKVDQDVQFSDLVAKFQFTKFLQSKSGYLIPDYELTTLSTPLQFKRYIKEKILPSANDPKLAYKEAEPNAIHPFSDNYASPNIYVVNDVTSKEQKSKYDTIMKEIQKLEDDATRKALETARSA</sequence>
<organism>
    <name type="scientific">Saccharomyces cerevisiae (strain ATCC 204508 / S288c)</name>
    <name type="common">Baker's yeast</name>
    <dbReference type="NCBI Taxonomy" id="559292"/>
    <lineage>
        <taxon>Eukaryota</taxon>
        <taxon>Fungi</taxon>
        <taxon>Dikarya</taxon>
        <taxon>Ascomycota</taxon>
        <taxon>Saccharomycotina</taxon>
        <taxon>Saccharomycetes</taxon>
        <taxon>Saccharomycetales</taxon>
        <taxon>Saccharomycetaceae</taxon>
        <taxon>Saccharomyces</taxon>
    </lineage>
</organism>
<gene>
    <name type="primary">MRPL13</name>
    <name type="ordered locus">YKR006C</name>
    <name type="ORF">YK105</name>
</gene>
<accession>Q02204</accession>
<accession>D6VX72</accession>